<evidence type="ECO:0000256" key="1">
    <source>
        <dbReference type="SAM" id="MobiDB-lite"/>
    </source>
</evidence>
<evidence type="ECO:0000305" key="2"/>
<keyword id="KW-1185">Reference proteome</keyword>
<protein>
    <recommendedName>
        <fullName>UBA-like domain-containing protein 2</fullName>
    </recommendedName>
</protein>
<gene>
    <name type="primary">ubald2</name>
    <name type="synonym">fam100b</name>
    <name type="ORF">zgc:112372</name>
</gene>
<sequence length="172" mass="18570">MSVNMDELRHQVMINQFVLTAGCAADQAKQLLQAAHWQFETALSSFFQEANIPSHHQMMCTPRNTPATPPNFPDAITMFSKLRASECPGGGVSAGGGSSAQVSMACSPPHASFWASPPPNQQPVWLPPSSPTGHHTLHHHHHHMHPPPSWPPVSQPANGPQTPVISALHGQR</sequence>
<comment type="similarity">
    <text evidence="2">Belongs to the UBALD family.</text>
</comment>
<proteinExistence type="evidence at transcript level"/>
<reference key="1">
    <citation type="submission" date="2005-05" db="EMBL/GenBank/DDBJ databases">
        <authorList>
            <consortium name="NIH - Zebrafish Gene Collection (ZGC) project"/>
        </authorList>
    </citation>
    <scope>NUCLEOTIDE SEQUENCE [LARGE SCALE MRNA]</scope>
</reference>
<name>UBAD2_DANRE</name>
<accession>Q502A3</accession>
<dbReference type="EMBL" id="BC095791">
    <property type="protein sequence ID" value="AAH95791.1"/>
    <property type="molecule type" value="mRNA"/>
</dbReference>
<dbReference type="RefSeq" id="NP_001018604.1">
    <property type="nucleotide sequence ID" value="NM_001020768.1"/>
</dbReference>
<dbReference type="SMR" id="Q502A3"/>
<dbReference type="STRING" id="7955.ENSDARP00000146655"/>
<dbReference type="PaxDb" id="7955-ENSDARP00000097631"/>
<dbReference type="GeneID" id="553806"/>
<dbReference type="KEGG" id="dre:553806"/>
<dbReference type="AGR" id="ZFIN:ZDB-GENE-050522-185"/>
<dbReference type="CTD" id="283991"/>
<dbReference type="ZFIN" id="ZDB-GENE-050522-185">
    <property type="gene designation" value="ubald2"/>
</dbReference>
<dbReference type="eggNOG" id="ENOG502S43S">
    <property type="taxonomic scope" value="Eukaryota"/>
</dbReference>
<dbReference type="InParanoid" id="Q502A3"/>
<dbReference type="OrthoDB" id="6093553at2759"/>
<dbReference type="PhylomeDB" id="Q502A3"/>
<dbReference type="PRO" id="PR:Q502A3"/>
<dbReference type="Proteomes" id="UP000000437">
    <property type="component" value="Chromosome 3"/>
</dbReference>
<dbReference type="CDD" id="cd14343">
    <property type="entry name" value="UBA_F100B_like"/>
    <property type="match status" value="1"/>
</dbReference>
<dbReference type="Gene3D" id="1.10.8.10">
    <property type="entry name" value="DNA helicase RuvA subunit, C-terminal domain"/>
    <property type="match status" value="1"/>
</dbReference>
<dbReference type="InterPro" id="IPR009060">
    <property type="entry name" value="UBA-like_sf"/>
</dbReference>
<dbReference type="InterPro" id="IPR054109">
    <property type="entry name" value="UBA_8"/>
</dbReference>
<dbReference type="InterPro" id="IPR039310">
    <property type="entry name" value="UBALD1/2"/>
</dbReference>
<dbReference type="PANTHER" id="PTHR31993">
    <property type="entry name" value="UBA-LIKE DOMAIN-CONTAINING PROTEIN 2"/>
    <property type="match status" value="1"/>
</dbReference>
<dbReference type="PANTHER" id="PTHR31993:SF6">
    <property type="entry name" value="UBA-LIKE DOMAIN-CONTAINING PROTEIN 2"/>
    <property type="match status" value="1"/>
</dbReference>
<dbReference type="Pfam" id="PF22566">
    <property type="entry name" value="UBA_8"/>
    <property type="match status" value="1"/>
</dbReference>
<dbReference type="SUPFAM" id="SSF46934">
    <property type="entry name" value="UBA-like"/>
    <property type="match status" value="1"/>
</dbReference>
<organism>
    <name type="scientific">Danio rerio</name>
    <name type="common">Zebrafish</name>
    <name type="synonym">Brachydanio rerio</name>
    <dbReference type="NCBI Taxonomy" id="7955"/>
    <lineage>
        <taxon>Eukaryota</taxon>
        <taxon>Metazoa</taxon>
        <taxon>Chordata</taxon>
        <taxon>Craniata</taxon>
        <taxon>Vertebrata</taxon>
        <taxon>Euteleostomi</taxon>
        <taxon>Actinopterygii</taxon>
        <taxon>Neopterygii</taxon>
        <taxon>Teleostei</taxon>
        <taxon>Ostariophysi</taxon>
        <taxon>Cypriniformes</taxon>
        <taxon>Danionidae</taxon>
        <taxon>Danioninae</taxon>
        <taxon>Danio</taxon>
    </lineage>
</organism>
<feature type="chain" id="PRO_0000239030" description="UBA-like domain-containing protein 2">
    <location>
        <begin position="1"/>
        <end position="172"/>
    </location>
</feature>
<feature type="region of interest" description="Disordered" evidence="1">
    <location>
        <begin position="118"/>
        <end position="172"/>
    </location>
</feature>
<feature type="compositionally biased region" description="Pro residues" evidence="1">
    <location>
        <begin position="118"/>
        <end position="130"/>
    </location>
</feature>
<feature type="compositionally biased region" description="Basic residues" evidence="1">
    <location>
        <begin position="135"/>
        <end position="145"/>
    </location>
</feature>